<feature type="signal peptide" evidence="5">
    <location>
        <begin position="1"/>
        <end position="16"/>
    </location>
</feature>
<feature type="chain" id="PRO_0000022963" description="Acidic phospholipase A2 jerdoxin">
    <location>
        <begin position="17"/>
        <end position="138"/>
    </location>
</feature>
<feature type="active site" evidence="2">
    <location>
        <position position="63"/>
    </location>
</feature>
<feature type="active site" evidence="2">
    <location>
        <position position="105"/>
    </location>
</feature>
<feature type="binding site" evidence="2">
    <location>
        <position position="43"/>
    </location>
    <ligand>
        <name>Ca(2+)</name>
        <dbReference type="ChEBI" id="CHEBI:29108"/>
    </ligand>
</feature>
<feature type="binding site" evidence="2">
    <location>
        <position position="45"/>
    </location>
    <ligand>
        <name>Ca(2+)</name>
        <dbReference type="ChEBI" id="CHEBI:29108"/>
    </ligand>
</feature>
<feature type="binding site" evidence="2">
    <location>
        <position position="47"/>
    </location>
    <ligand>
        <name>Ca(2+)</name>
        <dbReference type="ChEBI" id="CHEBI:29108"/>
    </ligand>
</feature>
<feature type="binding site" evidence="2">
    <location>
        <position position="64"/>
    </location>
    <ligand>
        <name>Ca(2+)</name>
        <dbReference type="ChEBI" id="CHEBI:29108"/>
    </ligand>
</feature>
<feature type="disulfide bond" evidence="2">
    <location>
        <begin position="42"/>
        <end position="131"/>
    </location>
</feature>
<feature type="disulfide bond" evidence="2">
    <location>
        <begin position="44"/>
        <end position="60"/>
    </location>
</feature>
<feature type="disulfide bond" evidence="2">
    <location>
        <begin position="59"/>
        <end position="111"/>
    </location>
</feature>
<feature type="disulfide bond" evidence="2">
    <location>
        <begin position="65"/>
        <end position="138"/>
    </location>
</feature>
<feature type="disulfide bond" evidence="2">
    <location>
        <begin position="66"/>
        <end position="104"/>
    </location>
</feature>
<feature type="disulfide bond" evidence="2">
    <location>
        <begin position="73"/>
        <end position="97"/>
    </location>
</feature>
<feature type="disulfide bond" evidence="2">
    <location>
        <begin position="91"/>
        <end position="102"/>
    </location>
</feature>
<name>PA2A_PROJR</name>
<accession>Q8JIY9</accession>
<organism>
    <name type="scientific">Protobothrops jerdonii</name>
    <name type="common">Jerdon's pitviper</name>
    <name type="synonym">Trimeresurus jerdonii</name>
    <dbReference type="NCBI Taxonomy" id="242841"/>
    <lineage>
        <taxon>Eukaryota</taxon>
        <taxon>Metazoa</taxon>
        <taxon>Chordata</taxon>
        <taxon>Craniata</taxon>
        <taxon>Vertebrata</taxon>
        <taxon>Euteleostomi</taxon>
        <taxon>Lepidosauria</taxon>
        <taxon>Squamata</taxon>
        <taxon>Bifurcata</taxon>
        <taxon>Unidentata</taxon>
        <taxon>Episquamata</taxon>
        <taxon>Toxicofera</taxon>
        <taxon>Serpentes</taxon>
        <taxon>Colubroidea</taxon>
        <taxon>Viperidae</taxon>
        <taxon>Crotalinae</taxon>
        <taxon>Protobothrops</taxon>
    </lineage>
</organism>
<evidence type="ECO:0000250" key="1"/>
<evidence type="ECO:0000250" key="2">
    <source>
        <dbReference type="UniProtKB" id="O42187"/>
    </source>
</evidence>
<evidence type="ECO:0000255" key="3">
    <source>
        <dbReference type="PROSITE-ProRule" id="PRU10035"/>
    </source>
</evidence>
<evidence type="ECO:0000255" key="4">
    <source>
        <dbReference type="PROSITE-ProRule" id="PRU10036"/>
    </source>
</evidence>
<evidence type="ECO:0000269" key="5">
    <source>
    </source>
</evidence>
<evidence type="ECO:0000305" key="6"/>
<reference key="1">
    <citation type="journal article" date="2002" name="Toxicon">
        <title>Characterization and cloning of a novel phospholipase A(2) from the venom of Trimeresurus jerdonii snake.</title>
        <authorList>
            <person name="Lu Q.M."/>
            <person name="Jin Y."/>
            <person name="Wei J.F."/>
            <person name="Li D.S."/>
            <person name="Zhu S.W."/>
            <person name="Wang W.Y."/>
            <person name="Xiong Y.L."/>
        </authorList>
    </citation>
    <scope>NUCLEOTIDE SEQUENCE [MRNA]</scope>
    <scope>PROTEIN SEQUENCE OF 17-37; 52-64; 88-96 AND 123-133</scope>
    <scope>CHARACTERIZATION</scope>
    <source>
        <tissue>Venom</tissue>
    </source>
</reference>
<proteinExistence type="evidence at protein level"/>
<protein>
    <recommendedName>
        <fullName>Acidic phospholipase A2 jerdoxin</fullName>
        <shortName>svPLA2</shortName>
        <ecNumber>3.1.1.4</ecNumber>
    </recommendedName>
    <alternativeName>
        <fullName>Phosphatidylcholine 2-acylhydrolase</fullName>
    </alternativeName>
</protein>
<dbReference type="EC" id="3.1.1.4"/>
<dbReference type="EMBL" id="AF504039">
    <property type="protein sequence ID" value="AAM33325.1"/>
    <property type="molecule type" value="mRNA"/>
</dbReference>
<dbReference type="SMR" id="Q8JIY9"/>
<dbReference type="BRENDA" id="3.1.1.4">
    <property type="organism ID" value="6812"/>
</dbReference>
<dbReference type="GO" id="GO:0005576">
    <property type="term" value="C:extracellular region"/>
    <property type="evidence" value="ECO:0007669"/>
    <property type="project" value="UniProtKB-SubCell"/>
</dbReference>
<dbReference type="GO" id="GO:0005509">
    <property type="term" value="F:calcium ion binding"/>
    <property type="evidence" value="ECO:0007669"/>
    <property type="project" value="InterPro"/>
</dbReference>
<dbReference type="GO" id="GO:0047498">
    <property type="term" value="F:calcium-dependent phospholipase A2 activity"/>
    <property type="evidence" value="ECO:0007669"/>
    <property type="project" value="TreeGrafter"/>
</dbReference>
<dbReference type="GO" id="GO:0005543">
    <property type="term" value="F:phospholipid binding"/>
    <property type="evidence" value="ECO:0007669"/>
    <property type="project" value="TreeGrafter"/>
</dbReference>
<dbReference type="GO" id="GO:0090729">
    <property type="term" value="F:toxin activity"/>
    <property type="evidence" value="ECO:0007669"/>
    <property type="project" value="UniProtKB-KW"/>
</dbReference>
<dbReference type="GO" id="GO:0050482">
    <property type="term" value="P:arachidonate secretion"/>
    <property type="evidence" value="ECO:0007669"/>
    <property type="project" value="InterPro"/>
</dbReference>
<dbReference type="GO" id="GO:0016042">
    <property type="term" value="P:lipid catabolic process"/>
    <property type="evidence" value="ECO:0007669"/>
    <property type="project" value="UniProtKB-KW"/>
</dbReference>
<dbReference type="GO" id="GO:0042130">
    <property type="term" value="P:negative regulation of T cell proliferation"/>
    <property type="evidence" value="ECO:0007669"/>
    <property type="project" value="TreeGrafter"/>
</dbReference>
<dbReference type="GO" id="GO:0006644">
    <property type="term" value="P:phospholipid metabolic process"/>
    <property type="evidence" value="ECO:0007669"/>
    <property type="project" value="InterPro"/>
</dbReference>
<dbReference type="CDD" id="cd00125">
    <property type="entry name" value="PLA2c"/>
    <property type="match status" value="1"/>
</dbReference>
<dbReference type="FunFam" id="1.20.90.10:FF:000001">
    <property type="entry name" value="Basic phospholipase A2 homolog"/>
    <property type="match status" value="1"/>
</dbReference>
<dbReference type="Gene3D" id="1.20.90.10">
    <property type="entry name" value="Phospholipase A2 domain"/>
    <property type="match status" value="1"/>
</dbReference>
<dbReference type="InterPro" id="IPR001211">
    <property type="entry name" value="PLipase_A2"/>
</dbReference>
<dbReference type="InterPro" id="IPR033112">
    <property type="entry name" value="PLipase_A2_Asp_AS"/>
</dbReference>
<dbReference type="InterPro" id="IPR016090">
    <property type="entry name" value="PLipase_A2_dom"/>
</dbReference>
<dbReference type="InterPro" id="IPR036444">
    <property type="entry name" value="PLipase_A2_dom_sf"/>
</dbReference>
<dbReference type="InterPro" id="IPR033113">
    <property type="entry name" value="PLipase_A2_His_AS"/>
</dbReference>
<dbReference type="PANTHER" id="PTHR11716">
    <property type="entry name" value="PHOSPHOLIPASE A2 FAMILY MEMBER"/>
    <property type="match status" value="1"/>
</dbReference>
<dbReference type="PANTHER" id="PTHR11716:SF9">
    <property type="entry name" value="PHOSPHOLIPASE A2, MEMBRANE ASSOCIATED"/>
    <property type="match status" value="1"/>
</dbReference>
<dbReference type="Pfam" id="PF00068">
    <property type="entry name" value="Phospholip_A2_1"/>
    <property type="match status" value="1"/>
</dbReference>
<dbReference type="PRINTS" id="PR00389">
    <property type="entry name" value="PHPHLIPASEA2"/>
</dbReference>
<dbReference type="SMART" id="SM00085">
    <property type="entry name" value="PA2c"/>
    <property type="match status" value="1"/>
</dbReference>
<dbReference type="SUPFAM" id="SSF48619">
    <property type="entry name" value="Phospholipase A2, PLA2"/>
    <property type="match status" value="1"/>
</dbReference>
<dbReference type="PROSITE" id="PS00119">
    <property type="entry name" value="PA2_ASP"/>
    <property type="match status" value="1"/>
</dbReference>
<dbReference type="PROSITE" id="PS00118">
    <property type="entry name" value="PA2_HIS"/>
    <property type="match status" value="1"/>
</dbReference>
<keyword id="KW-0106">Calcium</keyword>
<keyword id="KW-0903">Direct protein sequencing</keyword>
<keyword id="KW-1015">Disulfide bond</keyword>
<keyword id="KW-1199">Hemostasis impairing toxin</keyword>
<keyword id="KW-0378">Hydrolase</keyword>
<keyword id="KW-0442">Lipid degradation</keyword>
<keyword id="KW-0443">Lipid metabolism</keyword>
<keyword id="KW-0479">Metal-binding</keyword>
<keyword id="KW-1201">Platelet aggregation inhibiting toxin</keyword>
<keyword id="KW-0964">Secreted</keyword>
<keyword id="KW-0732">Signal</keyword>
<keyword id="KW-0800">Toxin</keyword>
<comment type="function">
    <text>Snake venom phospholipase A2 (PLA2) that displays edema-inducing activities, exhibits indirect hemolytic activity, and inhibits ADP-induced platelet aggregation. PLA2 catalyzes the calcium-dependent hydrolysis of the 2-acyl groups in 3-sn-phosphoglycerides.</text>
</comment>
<comment type="catalytic activity">
    <reaction evidence="3 4">
        <text>a 1,2-diacyl-sn-glycero-3-phosphocholine + H2O = a 1-acyl-sn-glycero-3-phosphocholine + a fatty acid + H(+)</text>
        <dbReference type="Rhea" id="RHEA:15801"/>
        <dbReference type="ChEBI" id="CHEBI:15377"/>
        <dbReference type="ChEBI" id="CHEBI:15378"/>
        <dbReference type="ChEBI" id="CHEBI:28868"/>
        <dbReference type="ChEBI" id="CHEBI:57643"/>
        <dbReference type="ChEBI" id="CHEBI:58168"/>
        <dbReference type="EC" id="3.1.1.4"/>
    </reaction>
</comment>
<comment type="cofactor">
    <cofactor>
        <name>Ca(2+)</name>
        <dbReference type="ChEBI" id="CHEBI:29108"/>
    </cofactor>
</comment>
<comment type="subunit">
    <text>Monomer.</text>
</comment>
<comment type="subcellular location">
    <subcellularLocation>
        <location evidence="1">Secreted</location>
    </subcellularLocation>
</comment>
<comment type="tissue specificity">
    <text>Expressed by the venom gland.</text>
</comment>
<comment type="similarity">
    <text evidence="6">Belongs to the phospholipase A2 family. Group II subfamily. D49 sub-subfamily.</text>
</comment>
<sequence length="138" mass="15639">MRTLWIMAVLLVGVEGHLWQFREMIKEATGKEPLTTYLFYACYCGWGGRGEPKDATDRCCFVHDCCYGKLTACSPKLDIYSYSQKNEDIVCGGGTECEKQICECDKAAAICFLDNLGTYNKEYNNYSKSRCIEESPKC</sequence>